<dbReference type="EMBL" id="AE013599">
    <property type="protein sequence ID" value="AAF47053.2"/>
    <property type="molecule type" value="Genomic_DNA"/>
</dbReference>
<dbReference type="EMBL" id="AE013599">
    <property type="protein sequence ID" value="ABV53897.1"/>
    <property type="molecule type" value="Genomic_DNA"/>
</dbReference>
<dbReference type="EMBL" id="AE013599">
    <property type="protein sequence ID" value="ABV53898.1"/>
    <property type="molecule type" value="Genomic_DNA"/>
</dbReference>
<dbReference type="EMBL" id="AY069626">
    <property type="protein sequence ID" value="AAL39771.1"/>
    <property type="molecule type" value="mRNA"/>
</dbReference>
<dbReference type="RefSeq" id="NP_001097437.1">
    <molecule id="Q9W1K5-1"/>
    <property type="nucleotide sequence ID" value="NM_001103967.2"/>
</dbReference>
<dbReference type="RefSeq" id="NP_001097438.1">
    <molecule id="Q9W1K5-1"/>
    <property type="nucleotide sequence ID" value="NM_001103968.2"/>
</dbReference>
<dbReference type="RefSeq" id="NP_611821.1">
    <molecule id="Q9W1K5-1"/>
    <property type="nucleotide sequence ID" value="NM_137977.4"/>
</dbReference>
<dbReference type="SMR" id="Q9W1K5"/>
<dbReference type="BioGRID" id="63351">
    <property type="interactions" value="16"/>
</dbReference>
<dbReference type="DIP" id="DIP-19601N"/>
<dbReference type="FunCoup" id="Q9W1K5">
    <property type="interactions" value="251"/>
</dbReference>
<dbReference type="IntAct" id="Q9W1K5">
    <property type="interactions" value="6"/>
</dbReference>
<dbReference type="STRING" id="7227.FBpp0112027"/>
<dbReference type="GlyGen" id="Q9W1K5">
    <property type="glycosylation" value="1 site"/>
</dbReference>
<dbReference type="iPTMnet" id="Q9W1K5"/>
<dbReference type="PaxDb" id="7227-FBpp0071996"/>
<dbReference type="DNASU" id="37755"/>
<dbReference type="EnsemblMetazoa" id="FBtr0072087">
    <molecule id="Q9W1K5-1"/>
    <property type="protein sequence ID" value="FBpp0071996"/>
    <property type="gene ID" value="FBgn0034897"/>
</dbReference>
<dbReference type="EnsemblMetazoa" id="FBtr0113113">
    <molecule id="Q9W1K5-1"/>
    <property type="protein sequence ID" value="FBpp0112026"/>
    <property type="gene ID" value="FBgn0034897"/>
</dbReference>
<dbReference type="EnsemblMetazoa" id="FBtr0113114">
    <molecule id="Q9W1K5-1"/>
    <property type="protein sequence ID" value="FBpp0112027"/>
    <property type="gene ID" value="FBgn0034897"/>
</dbReference>
<dbReference type="GeneID" id="37755"/>
<dbReference type="KEGG" id="dme:Dmel_CG11299"/>
<dbReference type="UCSC" id="CG11299-RA">
    <molecule id="Q9W1K5-1"/>
    <property type="organism name" value="d. melanogaster"/>
</dbReference>
<dbReference type="UCSC" id="CG11299-RB">
    <property type="organism name" value="d. melanogaster"/>
</dbReference>
<dbReference type="AGR" id="FB:FBgn0034897"/>
<dbReference type="CTD" id="37755"/>
<dbReference type="FlyBase" id="FBgn0034897">
    <property type="gene designation" value="Sesn"/>
</dbReference>
<dbReference type="VEuPathDB" id="VectorBase:FBgn0034897"/>
<dbReference type="eggNOG" id="KOG3746">
    <property type="taxonomic scope" value="Eukaryota"/>
</dbReference>
<dbReference type="GeneTree" id="ENSGT00950000183168"/>
<dbReference type="InParanoid" id="Q9W1K5"/>
<dbReference type="OMA" id="CDQVTQV"/>
<dbReference type="OrthoDB" id="337464at2759"/>
<dbReference type="PhylomeDB" id="Q9W1K5"/>
<dbReference type="Reactome" id="R-DME-5628897">
    <property type="pathway name" value="TP53 Regulates Metabolic Genes"/>
</dbReference>
<dbReference type="Reactome" id="R-DME-9755511">
    <property type="pathway name" value="KEAP1-NFE2L2 pathway"/>
</dbReference>
<dbReference type="BioGRID-ORCS" id="37755">
    <property type="hits" value="0 hits in 3 CRISPR screens"/>
</dbReference>
<dbReference type="GenomeRNAi" id="37755"/>
<dbReference type="PRO" id="PR:Q9W1K5"/>
<dbReference type="Proteomes" id="UP000000803">
    <property type="component" value="Chromosome 2R"/>
</dbReference>
<dbReference type="Bgee" id="FBgn0034897">
    <property type="expression patterns" value="Expressed in cardial cell (Drosophila) in dorsal vessel heart and 97 other cell types or tissues"/>
</dbReference>
<dbReference type="ExpressionAtlas" id="Q9W1K5">
    <property type="expression patterns" value="baseline and differential"/>
</dbReference>
<dbReference type="GO" id="GO:0005737">
    <property type="term" value="C:cytoplasm"/>
    <property type="evidence" value="ECO:0007669"/>
    <property type="project" value="UniProtKB-SubCell"/>
</dbReference>
<dbReference type="GO" id="GO:0005634">
    <property type="term" value="C:nucleus"/>
    <property type="evidence" value="ECO:0007669"/>
    <property type="project" value="UniProtKB-SubCell"/>
</dbReference>
<dbReference type="GO" id="GO:0140785">
    <property type="term" value="F:amino acid sensor activity"/>
    <property type="evidence" value="ECO:0000315"/>
    <property type="project" value="FlyBase"/>
</dbReference>
<dbReference type="GO" id="GO:0070728">
    <property type="term" value="F:L-leucine binding"/>
    <property type="evidence" value="ECO:0000318"/>
    <property type="project" value="GO_Central"/>
</dbReference>
<dbReference type="GO" id="GO:0016684">
    <property type="term" value="F:oxidoreductase activity, acting on peroxide as acceptor"/>
    <property type="evidence" value="ECO:0000318"/>
    <property type="project" value="GO_Central"/>
</dbReference>
<dbReference type="GO" id="GO:0004601">
    <property type="term" value="F:peroxidase activity"/>
    <property type="evidence" value="ECO:0000250"/>
    <property type="project" value="FlyBase"/>
</dbReference>
<dbReference type="GO" id="GO:0044877">
    <property type="term" value="F:protein-containing complex binding"/>
    <property type="evidence" value="ECO:0000314"/>
    <property type="project" value="FlyBase"/>
</dbReference>
<dbReference type="GO" id="GO:0071233">
    <property type="term" value="P:cellular response to L-leucine"/>
    <property type="evidence" value="ECO:0000315"/>
    <property type="project" value="FlyBase"/>
</dbReference>
<dbReference type="GO" id="GO:1990253">
    <property type="term" value="P:cellular response to leucine starvation"/>
    <property type="evidence" value="ECO:0000315"/>
    <property type="project" value="FlyBase"/>
</dbReference>
<dbReference type="GO" id="GO:0030308">
    <property type="term" value="P:negative regulation of cell growth"/>
    <property type="evidence" value="ECO:0000315"/>
    <property type="project" value="FlyBase"/>
</dbReference>
<dbReference type="GO" id="GO:1904262">
    <property type="term" value="P:negative regulation of TORC1 signaling"/>
    <property type="evidence" value="ECO:0000315"/>
    <property type="project" value="UniProtKB"/>
</dbReference>
<dbReference type="GO" id="GO:0016239">
    <property type="term" value="P:positive regulation of macroautophagy"/>
    <property type="evidence" value="ECO:0000318"/>
    <property type="project" value="GO_Central"/>
</dbReference>
<dbReference type="GO" id="GO:1903368">
    <property type="term" value="P:regulation of foraging behavior"/>
    <property type="evidence" value="ECO:0000315"/>
    <property type="project" value="FlyBase"/>
</dbReference>
<dbReference type="GO" id="GO:1901031">
    <property type="term" value="P:regulation of response to reactive oxygen species"/>
    <property type="evidence" value="ECO:0007669"/>
    <property type="project" value="InterPro"/>
</dbReference>
<dbReference type="Gene3D" id="1.20.1290.10">
    <property type="entry name" value="AhpD-like"/>
    <property type="match status" value="1"/>
</dbReference>
<dbReference type="InterPro" id="IPR029032">
    <property type="entry name" value="AhpD-like"/>
</dbReference>
<dbReference type="InterPro" id="IPR006730">
    <property type="entry name" value="Sestrin"/>
</dbReference>
<dbReference type="PANTHER" id="PTHR12474">
    <property type="entry name" value="P53 REGULATED PA26 NUCLEAR PROTEIN SESTRIN"/>
    <property type="match status" value="1"/>
</dbReference>
<dbReference type="PANTHER" id="PTHR12474:SF0">
    <property type="entry name" value="SESTRIN HOMOLOG"/>
    <property type="match status" value="1"/>
</dbReference>
<dbReference type="Pfam" id="PF04636">
    <property type="entry name" value="PA26"/>
    <property type="match status" value="1"/>
</dbReference>
<dbReference type="SUPFAM" id="SSF69118">
    <property type="entry name" value="AhpD-like"/>
    <property type="match status" value="1"/>
</dbReference>
<protein>
    <recommendedName>
        <fullName evidence="8">Sestrin homolog</fullName>
        <shortName evidence="7">dSesn</shortName>
    </recommendedName>
</protein>
<evidence type="ECO:0000250" key="1">
    <source>
        <dbReference type="UniProtKB" id="Q9Y6P5"/>
    </source>
</evidence>
<evidence type="ECO:0000256" key="2">
    <source>
        <dbReference type="SAM" id="MobiDB-lite"/>
    </source>
</evidence>
<evidence type="ECO:0000269" key="3">
    <source>
    </source>
</evidence>
<evidence type="ECO:0000269" key="4">
    <source>
    </source>
</evidence>
<evidence type="ECO:0000269" key="5">
    <source>
    </source>
</evidence>
<evidence type="ECO:0000269" key="6">
    <source>
    </source>
</evidence>
<evidence type="ECO:0000303" key="7">
    <source>
    </source>
</evidence>
<evidence type="ECO:0000305" key="8"/>
<evidence type="ECO:0000312" key="9">
    <source>
        <dbReference type="EMBL" id="AAF47053.2"/>
    </source>
</evidence>
<evidence type="ECO:0000312" key="10">
    <source>
        <dbReference type="FlyBase" id="FBgn0034897"/>
    </source>
</evidence>
<evidence type="ECO:0000312" key="11">
    <source>
        <dbReference type="Proteomes" id="UP000000803"/>
    </source>
</evidence>
<organism evidence="11">
    <name type="scientific">Drosophila melanogaster</name>
    <name type="common">Fruit fly</name>
    <dbReference type="NCBI Taxonomy" id="7227"/>
    <lineage>
        <taxon>Eukaryota</taxon>
        <taxon>Metazoa</taxon>
        <taxon>Ecdysozoa</taxon>
        <taxon>Arthropoda</taxon>
        <taxon>Hexapoda</taxon>
        <taxon>Insecta</taxon>
        <taxon>Pterygota</taxon>
        <taxon>Neoptera</taxon>
        <taxon>Endopterygota</taxon>
        <taxon>Diptera</taxon>
        <taxon>Brachycera</taxon>
        <taxon>Muscomorpha</taxon>
        <taxon>Ephydroidea</taxon>
        <taxon>Drosophilidae</taxon>
        <taxon>Drosophila</taxon>
        <taxon>Sophophora</taxon>
    </lineage>
</organism>
<keyword id="KW-0025">Alternative splicing</keyword>
<keyword id="KW-0963">Cytoplasm</keyword>
<keyword id="KW-0539">Nucleus</keyword>
<keyword id="KW-0597">Phosphoprotein</keyword>
<keyword id="KW-1185">Reference proteome</keyword>
<reference key="1">
    <citation type="journal article" date="2000" name="Science">
        <title>The genome sequence of Drosophila melanogaster.</title>
        <authorList>
            <person name="Adams M.D."/>
            <person name="Celniker S.E."/>
            <person name="Holt R.A."/>
            <person name="Evans C.A."/>
            <person name="Gocayne J.D."/>
            <person name="Amanatides P.G."/>
            <person name="Scherer S.E."/>
            <person name="Li P.W."/>
            <person name="Hoskins R.A."/>
            <person name="Galle R.F."/>
            <person name="George R.A."/>
            <person name="Lewis S.E."/>
            <person name="Richards S."/>
            <person name="Ashburner M."/>
            <person name="Henderson S.N."/>
            <person name="Sutton G.G."/>
            <person name="Wortman J.R."/>
            <person name="Yandell M.D."/>
            <person name="Zhang Q."/>
            <person name="Chen L.X."/>
            <person name="Brandon R.C."/>
            <person name="Rogers Y.-H.C."/>
            <person name="Blazej R.G."/>
            <person name="Champe M."/>
            <person name="Pfeiffer B.D."/>
            <person name="Wan K.H."/>
            <person name="Doyle C."/>
            <person name="Baxter E.G."/>
            <person name="Helt G."/>
            <person name="Nelson C.R."/>
            <person name="Miklos G.L.G."/>
            <person name="Abril J.F."/>
            <person name="Agbayani A."/>
            <person name="An H.-J."/>
            <person name="Andrews-Pfannkoch C."/>
            <person name="Baldwin D."/>
            <person name="Ballew R.M."/>
            <person name="Basu A."/>
            <person name="Baxendale J."/>
            <person name="Bayraktaroglu L."/>
            <person name="Beasley E.M."/>
            <person name="Beeson K.Y."/>
            <person name="Benos P.V."/>
            <person name="Berman B.P."/>
            <person name="Bhandari D."/>
            <person name="Bolshakov S."/>
            <person name="Borkova D."/>
            <person name="Botchan M.R."/>
            <person name="Bouck J."/>
            <person name="Brokstein P."/>
            <person name="Brottier P."/>
            <person name="Burtis K.C."/>
            <person name="Busam D.A."/>
            <person name="Butler H."/>
            <person name="Cadieu E."/>
            <person name="Center A."/>
            <person name="Chandra I."/>
            <person name="Cherry J.M."/>
            <person name="Cawley S."/>
            <person name="Dahlke C."/>
            <person name="Davenport L.B."/>
            <person name="Davies P."/>
            <person name="de Pablos B."/>
            <person name="Delcher A."/>
            <person name="Deng Z."/>
            <person name="Mays A.D."/>
            <person name="Dew I."/>
            <person name="Dietz S.M."/>
            <person name="Dodson K."/>
            <person name="Doup L.E."/>
            <person name="Downes M."/>
            <person name="Dugan-Rocha S."/>
            <person name="Dunkov B.C."/>
            <person name="Dunn P."/>
            <person name="Durbin K.J."/>
            <person name="Evangelista C.C."/>
            <person name="Ferraz C."/>
            <person name="Ferriera S."/>
            <person name="Fleischmann W."/>
            <person name="Fosler C."/>
            <person name="Gabrielian A.E."/>
            <person name="Garg N.S."/>
            <person name="Gelbart W.M."/>
            <person name="Glasser K."/>
            <person name="Glodek A."/>
            <person name="Gong F."/>
            <person name="Gorrell J.H."/>
            <person name="Gu Z."/>
            <person name="Guan P."/>
            <person name="Harris M."/>
            <person name="Harris N.L."/>
            <person name="Harvey D.A."/>
            <person name="Heiman T.J."/>
            <person name="Hernandez J.R."/>
            <person name="Houck J."/>
            <person name="Hostin D."/>
            <person name="Houston K.A."/>
            <person name="Howland T.J."/>
            <person name="Wei M.-H."/>
            <person name="Ibegwam C."/>
            <person name="Jalali M."/>
            <person name="Kalush F."/>
            <person name="Karpen G.H."/>
            <person name="Ke Z."/>
            <person name="Kennison J.A."/>
            <person name="Ketchum K.A."/>
            <person name="Kimmel B.E."/>
            <person name="Kodira C.D."/>
            <person name="Kraft C.L."/>
            <person name="Kravitz S."/>
            <person name="Kulp D."/>
            <person name="Lai Z."/>
            <person name="Lasko P."/>
            <person name="Lei Y."/>
            <person name="Levitsky A.A."/>
            <person name="Li J.H."/>
            <person name="Li Z."/>
            <person name="Liang Y."/>
            <person name="Lin X."/>
            <person name="Liu X."/>
            <person name="Mattei B."/>
            <person name="McIntosh T.C."/>
            <person name="McLeod M.P."/>
            <person name="McPherson D."/>
            <person name="Merkulov G."/>
            <person name="Milshina N.V."/>
            <person name="Mobarry C."/>
            <person name="Morris J."/>
            <person name="Moshrefi A."/>
            <person name="Mount S.M."/>
            <person name="Moy M."/>
            <person name="Murphy B."/>
            <person name="Murphy L."/>
            <person name="Muzny D.M."/>
            <person name="Nelson D.L."/>
            <person name="Nelson D.R."/>
            <person name="Nelson K.A."/>
            <person name="Nixon K."/>
            <person name="Nusskern D.R."/>
            <person name="Pacleb J.M."/>
            <person name="Palazzolo M."/>
            <person name="Pittman G.S."/>
            <person name="Pan S."/>
            <person name="Pollard J."/>
            <person name="Puri V."/>
            <person name="Reese M.G."/>
            <person name="Reinert K."/>
            <person name="Remington K."/>
            <person name="Saunders R.D.C."/>
            <person name="Scheeler F."/>
            <person name="Shen H."/>
            <person name="Shue B.C."/>
            <person name="Siden-Kiamos I."/>
            <person name="Simpson M."/>
            <person name="Skupski M.P."/>
            <person name="Smith T.J."/>
            <person name="Spier E."/>
            <person name="Spradling A.C."/>
            <person name="Stapleton M."/>
            <person name="Strong R."/>
            <person name="Sun E."/>
            <person name="Svirskas R."/>
            <person name="Tector C."/>
            <person name="Turner R."/>
            <person name="Venter E."/>
            <person name="Wang A.H."/>
            <person name="Wang X."/>
            <person name="Wang Z.-Y."/>
            <person name="Wassarman D.A."/>
            <person name="Weinstock G.M."/>
            <person name="Weissenbach J."/>
            <person name="Williams S.M."/>
            <person name="Woodage T."/>
            <person name="Worley K.C."/>
            <person name="Wu D."/>
            <person name="Yang S."/>
            <person name="Yao Q.A."/>
            <person name="Ye J."/>
            <person name="Yeh R.-F."/>
            <person name="Zaveri J.S."/>
            <person name="Zhan M."/>
            <person name="Zhang G."/>
            <person name="Zhao Q."/>
            <person name="Zheng L."/>
            <person name="Zheng X.H."/>
            <person name="Zhong F.N."/>
            <person name="Zhong W."/>
            <person name="Zhou X."/>
            <person name="Zhu S.C."/>
            <person name="Zhu X."/>
            <person name="Smith H.O."/>
            <person name="Gibbs R.A."/>
            <person name="Myers E.W."/>
            <person name="Rubin G.M."/>
            <person name="Venter J.C."/>
        </authorList>
    </citation>
    <scope>NUCLEOTIDE SEQUENCE [LARGE SCALE GENOMIC DNA]</scope>
    <source>
        <strain>Berkeley</strain>
    </source>
</reference>
<reference key="2">
    <citation type="journal article" date="2002" name="Genome Biol.">
        <title>Annotation of the Drosophila melanogaster euchromatic genome: a systematic review.</title>
        <authorList>
            <person name="Misra S."/>
            <person name="Crosby M.A."/>
            <person name="Mungall C.J."/>
            <person name="Matthews B.B."/>
            <person name="Campbell K.S."/>
            <person name="Hradecky P."/>
            <person name="Huang Y."/>
            <person name="Kaminker J.S."/>
            <person name="Millburn G.H."/>
            <person name="Prochnik S.E."/>
            <person name="Smith C.D."/>
            <person name="Tupy J.L."/>
            <person name="Whitfield E.J."/>
            <person name="Bayraktaroglu L."/>
            <person name="Berman B.P."/>
            <person name="Bettencourt B.R."/>
            <person name="Celniker S.E."/>
            <person name="de Grey A.D.N.J."/>
            <person name="Drysdale R.A."/>
            <person name="Harris N.L."/>
            <person name="Richter J."/>
            <person name="Russo S."/>
            <person name="Schroeder A.J."/>
            <person name="Shu S.Q."/>
            <person name="Stapleton M."/>
            <person name="Yamada C."/>
            <person name="Ashburner M."/>
            <person name="Gelbart W.M."/>
            <person name="Rubin G.M."/>
            <person name="Lewis S.E."/>
        </authorList>
    </citation>
    <scope>GENOME REANNOTATION</scope>
    <source>
        <strain>Berkeley</strain>
    </source>
</reference>
<reference key="3">
    <citation type="journal article" date="2002" name="Genome Biol.">
        <title>A Drosophila full-length cDNA resource.</title>
        <authorList>
            <person name="Stapleton M."/>
            <person name="Carlson J.W."/>
            <person name="Brokstein P."/>
            <person name="Yu C."/>
            <person name="Champe M."/>
            <person name="George R.A."/>
            <person name="Guarin H."/>
            <person name="Kronmiller B."/>
            <person name="Pacleb J.M."/>
            <person name="Park S."/>
            <person name="Wan K.H."/>
            <person name="Rubin G.M."/>
            <person name="Celniker S.E."/>
        </authorList>
    </citation>
    <scope>NUCLEOTIDE SEQUENCE [LARGE SCALE MRNA] (ISOFORM 1)</scope>
    <source>
        <strain>Berkeley</strain>
        <tissue>Embryo</tissue>
    </source>
</reference>
<reference key="4">
    <citation type="journal article" date="2008" name="J. Proteome Res.">
        <title>Phosphoproteome analysis of Drosophila melanogaster embryos.</title>
        <authorList>
            <person name="Zhai B."/>
            <person name="Villen J."/>
            <person name="Beausoleil S.A."/>
            <person name="Mintseris J."/>
            <person name="Gygi S.P."/>
        </authorList>
    </citation>
    <scope>PHOSPHORYLATION [LARGE SCALE ANALYSIS] AT SER-185 AND SER-190</scope>
    <scope>IDENTIFICATION BY MASS SPECTROMETRY</scope>
    <source>
        <tissue>Embryo</tissue>
    </source>
</reference>
<reference key="5">
    <citation type="journal article" date="2010" name="Science">
        <title>Sestrin as a feedback inhibitor of TOR that prevents age-related pathologies.</title>
        <authorList>
            <person name="Lee J.H."/>
            <person name="Budanov A.V."/>
            <person name="Park E.J."/>
            <person name="Birse R."/>
            <person name="Kim T.E."/>
            <person name="Perkins G.A."/>
            <person name="Ocorr K."/>
            <person name="Ellisman M.H."/>
            <person name="Bodmer R."/>
            <person name="Bier E."/>
            <person name="Karin M."/>
        </authorList>
    </citation>
    <scope>FUNCTION</scope>
    <scope>TISSUE SPECIFICITY</scope>
    <scope>INDUCTION</scope>
    <scope>DISRUPTION PHENOTYPE</scope>
    <scope>MUTAGENESIS OF CYS-86</scope>
</reference>
<reference key="6">
    <citation type="journal article" date="2017" name="Science">
        <title>SAMTOR is an S-adenosylmethionine sensor for the mTORC1 pathway.</title>
        <authorList>
            <person name="Gu X."/>
            <person name="Orozco J.M."/>
            <person name="Saxton R.A."/>
            <person name="Condon K.J."/>
            <person name="Liu G.Y."/>
            <person name="Krawczyk P.A."/>
            <person name="Scaria S.M."/>
            <person name="Harper J.W."/>
            <person name="Gygi S.P."/>
            <person name="Sabatini D.M."/>
        </authorList>
    </citation>
    <scope>FUNCTION</scope>
</reference>
<reference key="7">
    <citation type="journal article" date="2024" name="Nat. Commun.">
        <title>An evolutionary mechanism to assimilate new nutrient sensors into the mTORC1 pathway.</title>
        <authorList>
            <person name="Liu G.Y."/>
            <person name="Jouandin P."/>
            <person name="Bahng R.E."/>
            <person name="Perrimon N."/>
            <person name="Sabatini D.M."/>
        </authorList>
    </citation>
    <scope>INTERACTION WITH GATOR1 AND GATOR2</scope>
</reference>
<gene>
    <name evidence="10" type="primary">Sesn</name>
    <name evidence="9 10" type="ORF">CG11299</name>
</gene>
<feature type="chain" id="PRO_0000221186" description="Sestrin homolog">
    <location>
        <begin position="1"/>
        <end position="497"/>
    </location>
</feature>
<feature type="region of interest" description="Disordered" evidence="2">
    <location>
        <begin position="226"/>
        <end position="255"/>
    </location>
</feature>
<feature type="compositionally biased region" description="Polar residues" evidence="2">
    <location>
        <begin position="226"/>
        <end position="241"/>
    </location>
</feature>
<feature type="modified residue" description="Phosphoserine" evidence="3">
    <location>
        <position position="185"/>
    </location>
</feature>
<feature type="modified residue" description="Phosphoserine" evidence="3">
    <location>
        <position position="190"/>
    </location>
</feature>
<feature type="splice variant" id="VSP_006065" description="In isoform 2." evidence="8">
    <original>AAARHQCPYLVKRYEKEFINQGGDSAWLGGLD</original>
    <variation>SIFRLLFPTFISLPNWPKTIAIDWANEEHGLL</variation>
    <location>
        <begin position="80"/>
        <end position="111"/>
    </location>
</feature>
<feature type="splice variant" id="VSP_006066" description="In isoform 2." evidence="8">
    <location>
        <begin position="112"/>
        <end position="497"/>
    </location>
</feature>
<feature type="splice variant" id="VSP_006067" description="In isoform 3." evidence="8">
    <original>LLVRP</original>
    <variation>VRNQL</variation>
    <location>
        <begin position="433"/>
        <end position="437"/>
    </location>
</feature>
<feature type="splice variant" id="VSP_006068" description="In isoform 3." evidence="8">
    <location>
        <begin position="438"/>
        <end position="497"/>
    </location>
</feature>
<feature type="mutagenesis site" description="No effect on cell growth." evidence="4">
    <original>C</original>
    <variation>S</variation>
    <location>
        <position position="86"/>
    </location>
</feature>
<comment type="function">
    <text evidence="4 5">Functions as a negative feedback regulator of mTOR function.</text>
</comment>
<comment type="subunit">
    <text evidence="6">Associates with the GATOR2 complex; the interaction is probably direct (PubMed:38514639). Associates with the GATOR1 complex; the interaction is probably indirect and mediated by the GATOR2 complex (PubMed:38514639).</text>
</comment>
<comment type="subcellular location">
    <subcellularLocation>
        <location evidence="1">Nucleus</location>
    </subcellularLocation>
    <subcellularLocation>
        <location evidence="1">Cytoplasm</location>
    </subcellularLocation>
</comment>
<comment type="alternative products">
    <event type="alternative splicing"/>
    <isoform>
        <id>Q9W1K5-1</id>
        <name>1</name>
        <name>A</name>
        <name>B</name>
        <name>C</name>
        <sequence type="displayed"/>
    </isoform>
    <isoform>
        <id>Q9W1K5-2</id>
        <name>2</name>
        <sequence type="described" ref="VSP_006065 VSP_006066"/>
    </isoform>
    <isoform>
        <id>Q9W1K5-3</id>
        <name>3</name>
        <sequence type="described" ref="VSP_006067 VSP_006068"/>
    </isoform>
</comment>
<comment type="tissue specificity">
    <text evidence="4">Highly expressed in muscle-enriched tissues (at protein level).</text>
</comment>
<comment type="induction">
    <text evidence="4">Up-regulated by reactive oxygen species/ROS generated, for instance, upon chronic TOR signaling activation.</text>
</comment>
<comment type="disruption phenotype">
    <text evidence="4">Sesn-null flies do not exhibit developmental abnormalities. However, fat bodies from third-instar larvae contain more lipids and adults also contain more triglycerides. Flies heart function is compromised with arrhythmia and decreased heart rate. Skeletal muscle undergo accelerated age-related degeneration.</text>
</comment>
<comment type="similarity">
    <text evidence="8">Belongs to the sestrin family.</text>
</comment>
<accession>Q9W1K5</accession>
<accession>A8DYN7</accession>
<accession>Q9I7V1</accession>
<sequence>MYYAVDYYADMGQISQDCFAATQTGASDFDMDELDDLDQVTQVIGYHPQFHDHFLATQNFIMKGDGPLPNDYRYYLAIIAAARHQCPYLVKRYEKEFINQGGDSAWLGGLDFIPAKLRAIYDINKILAHRPWLLRKEHIERLTKGKNSWSLSEVVHAMVLLSHFHSLSSFVFSCGLTQKLDGLSSPKLKSPPAAVAALAPTILITPTSPTEPQKGKPVLAEISLNNANPDYDSQTAASSNGGAPPDSANAVADGPDATTLNGYLATAQQLPQQHGISVETLMERMKVLSQKQDECSEAELSSRFQKVEQQTAELAAVTPEAAVGVPTNLSHYVDDANFIYQDFARRGTESINTFRIQDYSWEDHGYSLVDGLYNDVGIFLDAKFRAAYNLTYCTMGGIKNVDTSKFRRAIWNYIQCIYGIRHDDYDYGEVNQLLVRPLKMFIKTACCFPERITTKDYDSVLVELQDSEKVHVNLMIMEARNQAELLYALREIMRYMT</sequence>
<name>SESN_DROME</name>
<proteinExistence type="evidence at protein level"/>